<name>TGB3_PVSP</name>
<keyword id="KW-1038">Host endoplasmic reticulum</keyword>
<keyword id="KW-1043">Host membrane</keyword>
<keyword id="KW-0472">Membrane</keyword>
<keyword id="KW-0812">Transmembrane</keyword>
<keyword id="KW-1133">Transmembrane helix</keyword>
<keyword id="KW-0813">Transport</keyword>
<keyword id="KW-0916">Viral movement protein</keyword>
<comment type="function">
    <text evidence="1">Plays a role in viral cell-to-cell propagation, by facilitating genome transport to neighboring plant cells through plasmosdesmata. May induce the formation of granular vesicles derived from the Endoplasmic reticulum, which align on actin filaments (By similarity).</text>
</comment>
<comment type="subcellular location">
    <subcellularLocation>
        <location evidence="1">Host endoplasmic reticulum membrane</location>
    </subcellularLocation>
</comment>
<comment type="miscellaneous">
    <text>TGBp1, TGBp2 and TGBp3 seem to act together for cell-to-cell propagation. TGBp1 is the main movement protein that physically cross the plasmodesma with the viral genome. TGBp2 and TGBp3 would facilitate TGBp1 function.</text>
</comment>
<comment type="similarity">
    <text evidence="3">Belongs to the Tymovirales TGBp3 protein family.</text>
</comment>
<gene>
    <name type="ORF">ORF4</name>
</gene>
<reference key="1">
    <citation type="journal article" date="1989" name="J. Gen. Virol.">
        <title>Organization and interviral homologies of the 3'-terminal portion of potato virus S RNA.</title>
        <authorList>
            <person name="Mackenzie D.J."/>
            <person name="Tremaine J.H."/>
            <person name="Stace-Smith R."/>
        </authorList>
    </citation>
    <scope>NUCLEOTIDE SEQUENCE [GENOMIC RNA]</scope>
</reference>
<feature type="chain" id="PRO_0000222617" description="Movement protein TGBp3">
    <location>
        <begin position="1"/>
        <end position="65"/>
    </location>
</feature>
<feature type="topological domain" description="Lumenal" evidence="2">
    <location>
        <begin position="1"/>
        <end position="6"/>
    </location>
</feature>
<feature type="transmembrane region" description="Helical" evidence="2">
    <location>
        <begin position="7"/>
        <end position="26"/>
    </location>
</feature>
<feature type="topological domain" description="Cytoplasmic" evidence="2">
    <location>
        <begin position="27"/>
        <end position="65"/>
    </location>
</feature>
<protein>
    <recommendedName>
        <fullName>Movement protein TGBp3</fullName>
    </recommendedName>
    <alternativeName>
        <fullName>7 kDa protein</fullName>
    </alternativeName>
    <alternativeName>
        <fullName>Triple gene block 3 protein</fullName>
        <shortName>TGBp3</shortName>
    </alternativeName>
</protein>
<proteinExistence type="inferred from homology"/>
<sequence>MLPKMQPSAQCLIVFSLAFVLGWYVLRPGNTSCVLLITGESVRLVNCELTKDLVEAVLLRPLKHL</sequence>
<accession>P16652</accession>
<organism>
    <name type="scientific">Potato virus S (strain Peruvian)</name>
    <dbReference type="NCBI Taxonomy" id="12170"/>
    <lineage>
        <taxon>Viruses</taxon>
        <taxon>Riboviria</taxon>
        <taxon>Orthornavirae</taxon>
        <taxon>Kitrinoviricota</taxon>
        <taxon>Alsuviricetes</taxon>
        <taxon>Tymovirales</taxon>
        <taxon>Betaflexiviridae</taxon>
        <taxon>Quinvirinae</taxon>
        <taxon>Carlavirus</taxon>
        <taxon>Potato virus S</taxon>
    </lineage>
</organism>
<organismHost>
    <name type="scientific">Solanum tuberosum</name>
    <name type="common">Potato</name>
    <dbReference type="NCBI Taxonomy" id="4113"/>
</organismHost>
<evidence type="ECO:0000250" key="1"/>
<evidence type="ECO:0000255" key="2"/>
<evidence type="ECO:0000305" key="3"/>
<dbReference type="EMBL" id="D00461">
    <property type="protein sequence ID" value="BAA00354.1"/>
    <property type="molecule type" value="Genomic_RNA"/>
</dbReference>
<dbReference type="PIR" id="JA0126">
    <property type="entry name" value="JA0126"/>
</dbReference>
<dbReference type="GO" id="GO:0044167">
    <property type="term" value="C:host cell endoplasmic reticulum membrane"/>
    <property type="evidence" value="ECO:0007669"/>
    <property type="project" value="UniProtKB-SubCell"/>
</dbReference>
<dbReference type="GO" id="GO:0016020">
    <property type="term" value="C:membrane"/>
    <property type="evidence" value="ECO:0007669"/>
    <property type="project" value="UniProtKB-KW"/>
</dbReference>
<dbReference type="GO" id="GO:0046740">
    <property type="term" value="P:transport of virus in host, cell to cell"/>
    <property type="evidence" value="ECO:0007669"/>
    <property type="project" value="UniProtKB-KW"/>
</dbReference>
<dbReference type="InterPro" id="IPR003411">
    <property type="entry name" value="TGBp3"/>
</dbReference>
<dbReference type="Pfam" id="PF02495">
    <property type="entry name" value="TGBp3"/>
    <property type="match status" value="1"/>
</dbReference>